<protein>
    <recommendedName>
        <fullName evidence="1">Macrolide export ATP-binding/permease protein MacB 1</fullName>
        <ecNumber evidence="1">7.6.2.-</ecNumber>
    </recommendedName>
</protein>
<sequence length="678" mass="73871">MTGPQQGKILLRLENVSREFITGEQTVRVLNNINLTLHSGEMVAIVGTSGSGKSTLMNILGCLDKPSAGEYWVAGRIPQYLGSDALAELRREHFGFIFQRYHLLNDLSARENVEIPAIYAGIDREERRKRAVNLLSRIGLAERLDYRPSQLSGGQQQRVSIARALMNGGDVILADEPTGALDTHSGNEVLNILKDLHQQGHTVVIVTHDMSIAEHAQRIIELKDGEIIADRPRDHAQEKPKMVDIPSVIDIPSMDEKISTGAQQETEIARKPLLTRWKVQYDRLHEAFKMAILAMAAQRLRTALTMLGIIIGIASVVSVVALGKGSQQQVLANINAMGTSTLEIFPGKDFGDMRSAAIHTLRDTDADVLAQQGYIHSVTPTVSTSVTLRYGNKSVSGTVNGVGEQYFLVRGYTIAQGMAFTRTSVNDLMQDAVIDENTRDKLFPNGETPLGKVILLGSLPCRVIGVAAKKQSGFGSDENLNVWIPYTTAMKRMLGQSYLKSITVRVNDDIDLANAEQGVIKLLSQRHGTQDFFVMNTDSIRQTIQATTSTMTLLVSMIAVISLIVGGIGVMNIMLVSVTERTKEIGVRMAVGARASDIMQQFLIEAVLVCLLGGSLGVALSLGIGLLFSLFSSNFSMVYSAASIITAFVCSSLIGVIFGFFPAKRAAEMDPIRALERE</sequence>
<proteinExistence type="inferred from homology"/>
<accession>Q1CJW8</accession>
<accession>C4GRZ6</accession>
<reference key="1">
    <citation type="journal article" date="2006" name="J. Bacteriol.">
        <title>Complete genome sequence of Yersinia pestis strains Antiqua and Nepal516: evidence of gene reduction in an emerging pathogen.</title>
        <authorList>
            <person name="Chain P.S.G."/>
            <person name="Hu P."/>
            <person name="Malfatti S.A."/>
            <person name="Radnedge L."/>
            <person name="Larimer F."/>
            <person name="Vergez L.M."/>
            <person name="Worsham P."/>
            <person name="Chu M.C."/>
            <person name="Andersen G.L."/>
        </authorList>
    </citation>
    <scope>NUCLEOTIDE SEQUENCE [LARGE SCALE GENOMIC DNA]</scope>
    <source>
        <strain>Nepal516</strain>
    </source>
</reference>
<reference key="2">
    <citation type="submission" date="2009-04" db="EMBL/GenBank/DDBJ databases">
        <title>Yersinia pestis Nepal516A whole genome shotgun sequencing project.</title>
        <authorList>
            <person name="Plunkett G. III"/>
            <person name="Anderson B.D."/>
            <person name="Baumler D.J."/>
            <person name="Burland V."/>
            <person name="Cabot E.L."/>
            <person name="Glasner J.D."/>
            <person name="Mau B."/>
            <person name="Neeno-Eckwall E."/>
            <person name="Perna N.T."/>
            <person name="Munk A.C."/>
            <person name="Tapia R."/>
            <person name="Green L.D."/>
            <person name="Rogers Y.C."/>
            <person name="Detter J.C."/>
            <person name="Bruce D.C."/>
            <person name="Brettin T.S."/>
        </authorList>
    </citation>
    <scope>NUCLEOTIDE SEQUENCE [LARGE SCALE GENOMIC DNA]</scope>
    <source>
        <strain>Nepal516</strain>
    </source>
</reference>
<keyword id="KW-0046">Antibiotic resistance</keyword>
<keyword id="KW-0067">ATP-binding</keyword>
<keyword id="KW-0997">Cell inner membrane</keyword>
<keyword id="KW-1003">Cell membrane</keyword>
<keyword id="KW-0472">Membrane</keyword>
<keyword id="KW-0547">Nucleotide-binding</keyword>
<keyword id="KW-1278">Translocase</keyword>
<keyword id="KW-0812">Transmembrane</keyword>
<keyword id="KW-1133">Transmembrane helix</keyword>
<keyword id="KW-0813">Transport</keyword>
<evidence type="ECO:0000255" key="1">
    <source>
        <dbReference type="HAMAP-Rule" id="MF_01720"/>
    </source>
</evidence>
<name>MACB1_YERPN</name>
<comment type="function">
    <text evidence="1">Part of the tripartite efflux system MacAB-TolC. MacB is a non-canonical ABC transporter that contains transmembrane domains (TMD), which form a pore in the inner membrane, and an ATP-binding domain (NBD), which is responsible for energy generation. Confers resistance against macrolides.</text>
</comment>
<comment type="subunit">
    <text evidence="1">Homodimer. Part of the tripartite efflux system MacAB-TolC, which is composed of an inner membrane transporter, MacB, a periplasmic membrane fusion protein, MacA, and an outer membrane component, TolC. The complex forms a large protein conduit and can translocate molecules across both the inner and outer membranes. Interacts with MacA.</text>
</comment>
<comment type="subcellular location">
    <subcellularLocation>
        <location evidence="1">Cell inner membrane</location>
        <topology evidence="1">Multi-pass membrane protein</topology>
    </subcellularLocation>
</comment>
<comment type="similarity">
    <text evidence="1">Belongs to the ABC transporter superfamily. Macrolide exporter (TC 3.A.1.122) family.</text>
</comment>
<gene>
    <name evidence="1" type="primary">macB1</name>
    <name type="ordered locus">YPN_1382</name>
    <name type="ORF">YP516_1524</name>
</gene>
<dbReference type="EC" id="7.6.2.-" evidence="1"/>
<dbReference type="EMBL" id="CP000305">
    <property type="protein sequence ID" value="ABG17712.1"/>
    <property type="molecule type" value="Genomic_DNA"/>
</dbReference>
<dbReference type="EMBL" id="ACNQ01000008">
    <property type="protein sequence ID" value="EEO77837.1"/>
    <property type="molecule type" value="Genomic_DNA"/>
</dbReference>
<dbReference type="RefSeq" id="WP_002208496.1">
    <property type="nucleotide sequence ID" value="NZ_ACNQ01000008.1"/>
</dbReference>
<dbReference type="SMR" id="Q1CJW8"/>
<dbReference type="KEGG" id="ypn:YPN_1382"/>
<dbReference type="HOGENOM" id="CLU_000604_78_1_6"/>
<dbReference type="Proteomes" id="UP000008936">
    <property type="component" value="Chromosome"/>
</dbReference>
<dbReference type="GO" id="GO:0005886">
    <property type="term" value="C:plasma membrane"/>
    <property type="evidence" value="ECO:0007669"/>
    <property type="project" value="UniProtKB-SubCell"/>
</dbReference>
<dbReference type="GO" id="GO:0005524">
    <property type="term" value="F:ATP binding"/>
    <property type="evidence" value="ECO:0007669"/>
    <property type="project" value="UniProtKB-KW"/>
</dbReference>
<dbReference type="GO" id="GO:0016887">
    <property type="term" value="F:ATP hydrolysis activity"/>
    <property type="evidence" value="ECO:0007669"/>
    <property type="project" value="InterPro"/>
</dbReference>
<dbReference type="GO" id="GO:0022857">
    <property type="term" value="F:transmembrane transporter activity"/>
    <property type="evidence" value="ECO:0007669"/>
    <property type="project" value="TreeGrafter"/>
</dbReference>
<dbReference type="GO" id="GO:0046677">
    <property type="term" value="P:response to antibiotic"/>
    <property type="evidence" value="ECO:0007669"/>
    <property type="project" value="UniProtKB-KW"/>
</dbReference>
<dbReference type="CDD" id="cd03255">
    <property type="entry name" value="ABC_MJ0796_LolCDE_FtsE"/>
    <property type="match status" value="1"/>
</dbReference>
<dbReference type="FunFam" id="3.40.50.300:FF:000032">
    <property type="entry name" value="Export ABC transporter ATP-binding protein"/>
    <property type="match status" value="1"/>
</dbReference>
<dbReference type="Gene3D" id="3.40.50.300">
    <property type="entry name" value="P-loop containing nucleotide triphosphate hydrolases"/>
    <property type="match status" value="1"/>
</dbReference>
<dbReference type="InterPro" id="IPR003593">
    <property type="entry name" value="AAA+_ATPase"/>
</dbReference>
<dbReference type="InterPro" id="IPR003838">
    <property type="entry name" value="ABC3_permease_C"/>
</dbReference>
<dbReference type="InterPro" id="IPR003439">
    <property type="entry name" value="ABC_transporter-like_ATP-bd"/>
</dbReference>
<dbReference type="InterPro" id="IPR017871">
    <property type="entry name" value="ABC_transporter-like_CS"/>
</dbReference>
<dbReference type="InterPro" id="IPR017911">
    <property type="entry name" value="MacB-like_ATP-bd"/>
</dbReference>
<dbReference type="InterPro" id="IPR025857">
    <property type="entry name" value="MacB_PCD"/>
</dbReference>
<dbReference type="InterPro" id="IPR050250">
    <property type="entry name" value="Macrolide_Exporter_MacB"/>
</dbReference>
<dbReference type="InterPro" id="IPR027417">
    <property type="entry name" value="P-loop_NTPase"/>
</dbReference>
<dbReference type="PANTHER" id="PTHR30572:SF14">
    <property type="entry name" value="MACROLIDE EXPORT ATP-BINDING_PERMEASE PROTEIN MACB"/>
    <property type="match status" value="1"/>
</dbReference>
<dbReference type="PANTHER" id="PTHR30572">
    <property type="entry name" value="MEMBRANE COMPONENT OF TRANSPORTER-RELATED"/>
    <property type="match status" value="1"/>
</dbReference>
<dbReference type="Pfam" id="PF00005">
    <property type="entry name" value="ABC_tran"/>
    <property type="match status" value="1"/>
</dbReference>
<dbReference type="Pfam" id="PF02687">
    <property type="entry name" value="FtsX"/>
    <property type="match status" value="1"/>
</dbReference>
<dbReference type="Pfam" id="PF12704">
    <property type="entry name" value="MacB_PCD"/>
    <property type="match status" value="1"/>
</dbReference>
<dbReference type="SMART" id="SM00382">
    <property type="entry name" value="AAA"/>
    <property type="match status" value="1"/>
</dbReference>
<dbReference type="SUPFAM" id="SSF52540">
    <property type="entry name" value="P-loop containing nucleoside triphosphate hydrolases"/>
    <property type="match status" value="1"/>
</dbReference>
<dbReference type="PROSITE" id="PS00211">
    <property type="entry name" value="ABC_TRANSPORTER_1"/>
    <property type="match status" value="1"/>
</dbReference>
<dbReference type="PROSITE" id="PS50893">
    <property type="entry name" value="ABC_TRANSPORTER_2"/>
    <property type="match status" value="1"/>
</dbReference>
<dbReference type="PROSITE" id="PS51267">
    <property type="entry name" value="MACB"/>
    <property type="match status" value="1"/>
</dbReference>
<organism>
    <name type="scientific">Yersinia pestis bv. Antiqua (strain Nepal516)</name>
    <dbReference type="NCBI Taxonomy" id="377628"/>
    <lineage>
        <taxon>Bacteria</taxon>
        <taxon>Pseudomonadati</taxon>
        <taxon>Pseudomonadota</taxon>
        <taxon>Gammaproteobacteria</taxon>
        <taxon>Enterobacterales</taxon>
        <taxon>Yersiniaceae</taxon>
        <taxon>Yersinia</taxon>
    </lineage>
</organism>
<feature type="chain" id="PRO_0000269990" description="Macrolide export ATP-binding/permease protein MacB 1">
    <location>
        <begin position="1"/>
        <end position="678"/>
    </location>
</feature>
<feature type="transmembrane region" description="Helical" evidence="1">
    <location>
        <begin position="303"/>
        <end position="323"/>
    </location>
</feature>
<feature type="transmembrane region" description="Helical" evidence="1">
    <location>
        <begin position="558"/>
        <end position="578"/>
    </location>
</feature>
<feature type="transmembrane region" description="Helical" evidence="1">
    <location>
        <begin position="608"/>
        <end position="628"/>
    </location>
</feature>
<feature type="transmembrane region" description="Helical" evidence="1">
    <location>
        <begin position="641"/>
        <end position="661"/>
    </location>
</feature>
<feature type="domain" description="ABC transporter" evidence="1">
    <location>
        <begin position="11"/>
        <end position="249"/>
    </location>
</feature>
<feature type="binding site" evidence="1">
    <location>
        <begin position="47"/>
        <end position="54"/>
    </location>
    <ligand>
        <name>ATP</name>
        <dbReference type="ChEBI" id="CHEBI:30616"/>
    </ligand>
</feature>